<evidence type="ECO:0000250" key="1">
    <source>
        <dbReference type="UniProtKB" id="P27144"/>
    </source>
</evidence>
<evidence type="ECO:0000250" key="2">
    <source>
        <dbReference type="UniProtKB" id="Q9WUR9"/>
    </source>
</evidence>
<evidence type="ECO:0000255" key="3">
    <source>
        <dbReference type="HAMAP-Rule" id="MF_03170"/>
    </source>
</evidence>
<accession>Q5R421</accession>
<protein>
    <recommendedName>
        <fullName evidence="1">Adenylate kinase 4, mitochondrial</fullName>
        <ecNumber evidence="1">2.7.4.4</ecNumber>
        <ecNumber evidence="1">2.7.4.6</ecNumber>
    </recommendedName>
    <alternativeName>
        <fullName evidence="3">Adenylate kinase 3-like</fullName>
    </alternativeName>
    <alternativeName>
        <fullName evidence="3">GTP:AMP phosphotransferase AK4</fullName>
    </alternativeName>
</protein>
<sequence length="223" mass="25295">MASKLLRAVILGPPGSGKGTVCQRIAQNFGLQHLSSGHFLRENIKANTEVGEMAKQYIEKSLLVPDHVITRLMMSELENRRGQHWLLDGFPRTLGQAEALDKICEVDLVISLNIPFETLKDRLSRRWIHPPSGRVYNLDFNPPHVHGIDDVTGEPLVQQEDDKPEAVAARLRQYKDVAKPVIELYKSRGVLHQFSGTETNKIWPYVYTLFSNKITPIQSKEAY</sequence>
<feature type="chain" id="PRO_0000158928" description="Adenylate kinase 4, mitochondrial">
    <location>
        <begin position="1"/>
        <end position="223"/>
    </location>
</feature>
<feature type="region of interest" description="NMP" evidence="3">
    <location>
        <begin position="35"/>
        <end position="64"/>
    </location>
</feature>
<feature type="region of interest" description="LID" evidence="3">
    <location>
        <begin position="125"/>
        <end position="162"/>
    </location>
</feature>
<feature type="binding site" evidence="3">
    <location>
        <begin position="15"/>
        <end position="20"/>
    </location>
    <ligand>
        <name>a ribonucleoside 5'-triphosphate</name>
        <dbReference type="ChEBI" id="CHEBI:61557"/>
    </ligand>
</feature>
<feature type="binding site" evidence="3">
    <location>
        <position position="36"/>
    </location>
    <ligand>
        <name>AMP</name>
        <dbReference type="ChEBI" id="CHEBI:456215"/>
    </ligand>
</feature>
<feature type="binding site" evidence="3">
    <location>
        <position position="41"/>
    </location>
    <ligand>
        <name>AMP</name>
        <dbReference type="ChEBI" id="CHEBI:456215"/>
    </ligand>
</feature>
<feature type="binding site" evidence="3">
    <location>
        <begin position="62"/>
        <end position="64"/>
    </location>
    <ligand>
        <name>AMP</name>
        <dbReference type="ChEBI" id="CHEBI:456215"/>
    </ligand>
</feature>
<feature type="binding site" evidence="3">
    <location>
        <begin position="89"/>
        <end position="92"/>
    </location>
    <ligand>
        <name>AMP</name>
        <dbReference type="ChEBI" id="CHEBI:456215"/>
    </ligand>
</feature>
<feature type="binding site" evidence="3">
    <location>
        <position position="96"/>
    </location>
    <ligand>
        <name>AMP</name>
        <dbReference type="ChEBI" id="CHEBI:456215"/>
    </ligand>
</feature>
<feature type="binding site" evidence="3">
    <location>
        <position position="126"/>
    </location>
    <ligand>
        <name>a ribonucleoside 5'-triphosphate</name>
        <dbReference type="ChEBI" id="CHEBI:61557"/>
    </ligand>
</feature>
<feature type="binding site" evidence="3">
    <location>
        <begin position="135"/>
        <end position="136"/>
    </location>
    <ligand>
        <name>a ribonucleoside 5'-triphosphate</name>
        <dbReference type="ChEBI" id="CHEBI:61557"/>
    </ligand>
</feature>
<feature type="binding site" evidence="3">
    <location>
        <position position="170"/>
    </location>
    <ligand>
        <name>AMP</name>
        <dbReference type="ChEBI" id="CHEBI:456215"/>
    </ligand>
</feature>
<feature type="binding site" evidence="3">
    <location>
        <position position="199"/>
    </location>
    <ligand>
        <name>a ribonucleoside 5'-triphosphate</name>
        <dbReference type="ChEBI" id="CHEBI:61557"/>
    </ligand>
</feature>
<feature type="modified residue" description="N6-succinyllysine" evidence="2">
    <location>
        <position position="60"/>
    </location>
</feature>
<feature type="modified residue" description="N6-acetyllysine" evidence="2">
    <location>
        <position position="175"/>
    </location>
</feature>
<feature type="modified residue" description="N6-acetyllysine; alternate" evidence="2">
    <location>
        <position position="179"/>
    </location>
</feature>
<feature type="modified residue" description="N6-succinyllysine; alternate" evidence="2">
    <location>
        <position position="179"/>
    </location>
</feature>
<feature type="modified residue" description="N6-acetyllysine; alternate" evidence="2">
    <location>
        <position position="186"/>
    </location>
</feature>
<feature type="modified residue" description="N6-succinyllysine; alternate" evidence="2">
    <location>
        <position position="186"/>
    </location>
</feature>
<name>KAD4_PONAB</name>
<dbReference type="EC" id="2.7.4.4" evidence="1"/>
<dbReference type="EC" id="2.7.4.6" evidence="1"/>
<dbReference type="EMBL" id="CR861439">
    <property type="protein sequence ID" value="CAH93495.1"/>
    <property type="molecule type" value="mRNA"/>
</dbReference>
<dbReference type="RefSeq" id="NP_001127046.1">
    <property type="nucleotide sequence ID" value="NM_001133574.1"/>
</dbReference>
<dbReference type="RefSeq" id="XP_009247690.1">
    <property type="nucleotide sequence ID" value="XM_009249415.1"/>
</dbReference>
<dbReference type="RefSeq" id="XP_009247693.1">
    <property type="nucleotide sequence ID" value="XM_009249418.4"/>
</dbReference>
<dbReference type="RefSeq" id="XP_009247695.1">
    <property type="nucleotide sequence ID" value="XM_009249420.4"/>
</dbReference>
<dbReference type="RefSeq" id="XP_009247698.1">
    <property type="nucleotide sequence ID" value="XM_009249423.4"/>
</dbReference>
<dbReference type="RefSeq" id="XP_054397739.1">
    <property type="nucleotide sequence ID" value="XM_054541764.2"/>
</dbReference>
<dbReference type="RefSeq" id="XP_054397770.1">
    <property type="nucleotide sequence ID" value="XM_054541795.2"/>
</dbReference>
<dbReference type="SMR" id="Q5R421"/>
<dbReference type="FunCoup" id="Q5R421">
    <property type="interactions" value="1644"/>
</dbReference>
<dbReference type="STRING" id="9601.ENSPPYP00000001480"/>
<dbReference type="Ensembl" id="ENSPPYT00000001527.2">
    <property type="protein sequence ID" value="ENSPPYP00000001480.1"/>
    <property type="gene ID" value="ENSPPYG00000001269.2"/>
</dbReference>
<dbReference type="GeneID" id="100174073"/>
<dbReference type="KEGG" id="pon:100174073"/>
<dbReference type="CTD" id="205"/>
<dbReference type="eggNOG" id="KOG3078">
    <property type="taxonomic scope" value="Eukaryota"/>
</dbReference>
<dbReference type="GeneTree" id="ENSGT00940000154568"/>
<dbReference type="HOGENOM" id="CLU_032354_1_1_1"/>
<dbReference type="InParanoid" id="Q5R421"/>
<dbReference type="OMA" id="IKVENTM"/>
<dbReference type="OrthoDB" id="439792at2759"/>
<dbReference type="TreeFam" id="TF312916"/>
<dbReference type="Proteomes" id="UP000001595">
    <property type="component" value="Chromosome 1"/>
</dbReference>
<dbReference type="GO" id="GO:0005759">
    <property type="term" value="C:mitochondrial matrix"/>
    <property type="evidence" value="ECO:0007669"/>
    <property type="project" value="UniProtKB-SubCell"/>
</dbReference>
<dbReference type="GO" id="GO:0004017">
    <property type="term" value="F:adenylate kinase activity"/>
    <property type="evidence" value="ECO:0007669"/>
    <property type="project" value="InterPro"/>
</dbReference>
<dbReference type="GO" id="GO:0005524">
    <property type="term" value="F:ATP binding"/>
    <property type="evidence" value="ECO:0007669"/>
    <property type="project" value="UniProtKB-KW"/>
</dbReference>
<dbReference type="GO" id="GO:0036430">
    <property type="term" value="F:CMP kinase activity"/>
    <property type="evidence" value="ECO:0007669"/>
    <property type="project" value="RHEA"/>
</dbReference>
<dbReference type="GO" id="GO:0036431">
    <property type="term" value="F:dCMP kinase activity"/>
    <property type="evidence" value="ECO:0007669"/>
    <property type="project" value="RHEA"/>
</dbReference>
<dbReference type="GO" id="GO:0047506">
    <property type="term" value="F:deoxyadenylate kinase activity"/>
    <property type="evidence" value="ECO:0007669"/>
    <property type="project" value="RHEA"/>
</dbReference>
<dbReference type="GO" id="GO:0005525">
    <property type="term" value="F:GTP binding"/>
    <property type="evidence" value="ECO:0007669"/>
    <property type="project" value="UniProtKB-KW"/>
</dbReference>
<dbReference type="GO" id="GO:0004550">
    <property type="term" value="F:nucleoside diphosphate kinase activity"/>
    <property type="evidence" value="ECO:0000250"/>
    <property type="project" value="UniProtKB"/>
</dbReference>
<dbReference type="GO" id="GO:0046899">
    <property type="term" value="F:nucleoside triphosphate adenylate kinase activity"/>
    <property type="evidence" value="ECO:0007669"/>
    <property type="project" value="UniProtKB-UniRule"/>
</dbReference>
<dbReference type="GO" id="GO:0006172">
    <property type="term" value="P:ADP biosynthetic process"/>
    <property type="evidence" value="ECO:0007669"/>
    <property type="project" value="UniProtKB-UniRule"/>
</dbReference>
<dbReference type="GO" id="GO:0046033">
    <property type="term" value="P:AMP metabolic process"/>
    <property type="evidence" value="ECO:0007669"/>
    <property type="project" value="UniProtKB-UniRule"/>
</dbReference>
<dbReference type="GO" id="GO:0046034">
    <property type="term" value="P:ATP metabolic process"/>
    <property type="evidence" value="ECO:0007669"/>
    <property type="project" value="UniProtKB-UniRule"/>
</dbReference>
<dbReference type="GO" id="GO:0071456">
    <property type="term" value="P:cellular response to hypoxia"/>
    <property type="evidence" value="ECO:0000250"/>
    <property type="project" value="UniProtKB"/>
</dbReference>
<dbReference type="GO" id="GO:0046039">
    <property type="term" value="P:GTP metabolic process"/>
    <property type="evidence" value="ECO:0007669"/>
    <property type="project" value="UniProtKB-UniRule"/>
</dbReference>
<dbReference type="GO" id="GO:0002082">
    <property type="term" value="P:regulation of oxidative phosphorylation"/>
    <property type="evidence" value="ECO:0000250"/>
    <property type="project" value="UniProtKB"/>
</dbReference>
<dbReference type="GO" id="GO:0009188">
    <property type="term" value="P:ribonucleoside diphosphate biosynthetic process"/>
    <property type="evidence" value="ECO:0000250"/>
    <property type="project" value="UniProtKB"/>
</dbReference>
<dbReference type="CDD" id="cd01428">
    <property type="entry name" value="ADK"/>
    <property type="match status" value="1"/>
</dbReference>
<dbReference type="FunFam" id="3.40.50.300:FF:000106">
    <property type="entry name" value="Adenylate kinase mitochondrial"/>
    <property type="match status" value="1"/>
</dbReference>
<dbReference type="Gene3D" id="3.40.50.300">
    <property type="entry name" value="P-loop containing nucleotide triphosphate hydrolases"/>
    <property type="match status" value="1"/>
</dbReference>
<dbReference type="HAMAP" id="MF_00235">
    <property type="entry name" value="Adenylate_kinase_Adk"/>
    <property type="match status" value="1"/>
</dbReference>
<dbReference type="HAMAP" id="MF_03169">
    <property type="entry name" value="Adenylate_kinase_AK3"/>
    <property type="match status" value="1"/>
</dbReference>
<dbReference type="HAMAP" id="MF_03170">
    <property type="entry name" value="Adenylate_kinase_AK4"/>
    <property type="match status" value="1"/>
</dbReference>
<dbReference type="InterPro" id="IPR006259">
    <property type="entry name" value="Adenyl_kin_sub"/>
</dbReference>
<dbReference type="InterPro" id="IPR000850">
    <property type="entry name" value="Adenylat/UMP-CMP_kin"/>
</dbReference>
<dbReference type="InterPro" id="IPR033690">
    <property type="entry name" value="Adenylat_kinase_CS"/>
</dbReference>
<dbReference type="InterPro" id="IPR007862">
    <property type="entry name" value="Adenylate_kinase_lid-dom"/>
</dbReference>
<dbReference type="InterPro" id="IPR036193">
    <property type="entry name" value="ADK_active_lid_dom_sf"/>
</dbReference>
<dbReference type="InterPro" id="IPR028586">
    <property type="entry name" value="AK3/Ak4_mitochondrial"/>
</dbReference>
<dbReference type="InterPro" id="IPR028585">
    <property type="entry name" value="AK4_mitochondrial"/>
</dbReference>
<dbReference type="InterPro" id="IPR027417">
    <property type="entry name" value="P-loop_NTPase"/>
</dbReference>
<dbReference type="NCBIfam" id="TIGR01351">
    <property type="entry name" value="adk"/>
    <property type="match status" value="1"/>
</dbReference>
<dbReference type="PANTHER" id="PTHR23359">
    <property type="entry name" value="NUCLEOTIDE KINASE"/>
    <property type="match status" value="1"/>
</dbReference>
<dbReference type="Pfam" id="PF00406">
    <property type="entry name" value="ADK"/>
    <property type="match status" value="1"/>
</dbReference>
<dbReference type="Pfam" id="PF05191">
    <property type="entry name" value="ADK_lid"/>
    <property type="match status" value="1"/>
</dbReference>
<dbReference type="PRINTS" id="PR00094">
    <property type="entry name" value="ADENYLTKNASE"/>
</dbReference>
<dbReference type="SUPFAM" id="SSF57774">
    <property type="entry name" value="Microbial and mitochondrial ADK, insert 'zinc finger' domain"/>
    <property type="match status" value="1"/>
</dbReference>
<dbReference type="SUPFAM" id="SSF52540">
    <property type="entry name" value="P-loop containing nucleoside triphosphate hydrolases"/>
    <property type="match status" value="1"/>
</dbReference>
<dbReference type="PROSITE" id="PS00113">
    <property type="entry name" value="ADENYLATE_KINASE"/>
    <property type="match status" value="1"/>
</dbReference>
<proteinExistence type="evidence at transcript level"/>
<reference key="1">
    <citation type="submission" date="2004-11" db="EMBL/GenBank/DDBJ databases">
        <authorList>
            <consortium name="The German cDNA consortium"/>
        </authorList>
    </citation>
    <scope>NUCLEOTIDE SEQUENCE [LARGE SCALE MRNA]</scope>
    <source>
        <tissue>Brain cortex</tissue>
    </source>
</reference>
<keyword id="KW-0007">Acetylation</keyword>
<keyword id="KW-0067">ATP-binding</keyword>
<keyword id="KW-0342">GTP-binding</keyword>
<keyword id="KW-0418">Kinase</keyword>
<keyword id="KW-0496">Mitochondrion</keyword>
<keyword id="KW-0547">Nucleotide-binding</keyword>
<keyword id="KW-1185">Reference proteome</keyword>
<keyword id="KW-0808">Transferase</keyword>
<comment type="function">
    <text evidence="1">Broad-specificity mitochondrial nucleoside phosphate kinase involved in cellular nucleotide homeostasis by catalyzing nucleoside-phosphate interconversions. Similar to other adenylate kinases, preferentially catalyzes the phosphorylation of the nucleoside monophosphate AMP with ATP as phosphate donor to produce ADP. Phosphorylates only AMP when using GTP as phosphate donor. In vitro, can also catalyze the phosphorylation of CMP, dAMP and dCMP and use GTP as an alternate phosphate donor. Moreover, exhibits a diphosphate kinase activity, producing ATP, CTP, GTP, UTP, TTP, dATP, dCTP and dGTP from the corresponding diphosphate substrates with either ATP or GTP as phosphate donors. Plays a role in controlling cellular ATP levels by regulating phosphorylation and activation of the energy sensor protein kinase AMPK. Plays a protective role in the cellular response to oxidative stress.</text>
</comment>
<comment type="catalytic activity">
    <reaction evidence="1">
        <text>a ribonucleoside 5'-phosphate + ATP = a ribonucleoside 5'-diphosphate + ADP</text>
        <dbReference type="Rhea" id="RHEA:24036"/>
        <dbReference type="ChEBI" id="CHEBI:30616"/>
        <dbReference type="ChEBI" id="CHEBI:57930"/>
        <dbReference type="ChEBI" id="CHEBI:58043"/>
        <dbReference type="ChEBI" id="CHEBI:456216"/>
        <dbReference type="EC" id="2.7.4.4"/>
    </reaction>
</comment>
<comment type="catalytic activity">
    <reaction evidence="1">
        <text>AMP + ATP = 2 ADP</text>
        <dbReference type="Rhea" id="RHEA:12973"/>
        <dbReference type="ChEBI" id="CHEBI:30616"/>
        <dbReference type="ChEBI" id="CHEBI:456215"/>
        <dbReference type="ChEBI" id="CHEBI:456216"/>
    </reaction>
</comment>
<comment type="catalytic activity">
    <reaction evidence="1">
        <text>GTP + AMP = GDP + ADP</text>
        <dbReference type="Rhea" id="RHEA:29863"/>
        <dbReference type="ChEBI" id="CHEBI:37565"/>
        <dbReference type="ChEBI" id="CHEBI:58189"/>
        <dbReference type="ChEBI" id="CHEBI:456215"/>
        <dbReference type="ChEBI" id="CHEBI:456216"/>
    </reaction>
</comment>
<comment type="catalytic activity">
    <reaction evidence="1">
        <text>CMP + ATP = CDP + ADP</text>
        <dbReference type="Rhea" id="RHEA:11600"/>
        <dbReference type="ChEBI" id="CHEBI:30616"/>
        <dbReference type="ChEBI" id="CHEBI:58069"/>
        <dbReference type="ChEBI" id="CHEBI:60377"/>
        <dbReference type="ChEBI" id="CHEBI:456216"/>
    </reaction>
</comment>
<comment type="catalytic activity">
    <reaction evidence="1">
        <text>GTP + CMP = CDP + GDP</text>
        <dbReference type="Rhea" id="RHEA:79855"/>
        <dbReference type="ChEBI" id="CHEBI:37565"/>
        <dbReference type="ChEBI" id="CHEBI:58069"/>
        <dbReference type="ChEBI" id="CHEBI:58189"/>
        <dbReference type="ChEBI" id="CHEBI:60377"/>
    </reaction>
</comment>
<comment type="catalytic activity">
    <reaction evidence="1">
        <text>dAMP + ATP = dADP + ADP</text>
        <dbReference type="Rhea" id="RHEA:23100"/>
        <dbReference type="ChEBI" id="CHEBI:30616"/>
        <dbReference type="ChEBI" id="CHEBI:57667"/>
        <dbReference type="ChEBI" id="CHEBI:58245"/>
        <dbReference type="ChEBI" id="CHEBI:456216"/>
    </reaction>
</comment>
<comment type="catalytic activity">
    <reaction evidence="1">
        <text>dCMP + ATP = dCDP + ADP</text>
        <dbReference type="Rhea" id="RHEA:25094"/>
        <dbReference type="ChEBI" id="CHEBI:30616"/>
        <dbReference type="ChEBI" id="CHEBI:57566"/>
        <dbReference type="ChEBI" id="CHEBI:58593"/>
        <dbReference type="ChEBI" id="CHEBI:456216"/>
    </reaction>
</comment>
<comment type="catalytic activity">
    <reaction evidence="1">
        <text>a 2'-deoxyribonucleoside 5'-diphosphate + ATP = a 2'-deoxyribonucleoside 5'-triphosphate + ADP</text>
        <dbReference type="Rhea" id="RHEA:44640"/>
        <dbReference type="ChEBI" id="CHEBI:30616"/>
        <dbReference type="ChEBI" id="CHEBI:61560"/>
        <dbReference type="ChEBI" id="CHEBI:73316"/>
        <dbReference type="ChEBI" id="CHEBI:456216"/>
        <dbReference type="EC" id="2.7.4.6"/>
    </reaction>
</comment>
<comment type="catalytic activity">
    <reaction evidence="1">
        <text>a ribonucleoside 5'-diphosphate + ATP = a ribonucleoside 5'-triphosphate + ADP</text>
        <dbReference type="Rhea" id="RHEA:18113"/>
        <dbReference type="ChEBI" id="CHEBI:30616"/>
        <dbReference type="ChEBI" id="CHEBI:57930"/>
        <dbReference type="ChEBI" id="CHEBI:61557"/>
        <dbReference type="ChEBI" id="CHEBI:456216"/>
        <dbReference type="EC" id="2.7.4.6"/>
    </reaction>
</comment>
<comment type="catalytic activity">
    <reaction evidence="1">
        <text>GDP + ATP = GTP + ADP</text>
        <dbReference type="Rhea" id="RHEA:27686"/>
        <dbReference type="ChEBI" id="CHEBI:30616"/>
        <dbReference type="ChEBI" id="CHEBI:37565"/>
        <dbReference type="ChEBI" id="CHEBI:58189"/>
        <dbReference type="ChEBI" id="CHEBI:456216"/>
        <dbReference type="EC" id="2.7.4.6"/>
    </reaction>
</comment>
<comment type="catalytic activity">
    <reaction evidence="1">
        <text>CDP + GTP = CTP + GDP</text>
        <dbReference type="Rhea" id="RHEA:79859"/>
        <dbReference type="ChEBI" id="CHEBI:37563"/>
        <dbReference type="ChEBI" id="CHEBI:37565"/>
        <dbReference type="ChEBI" id="CHEBI:58069"/>
        <dbReference type="ChEBI" id="CHEBI:58189"/>
    </reaction>
</comment>
<comment type="catalytic activity">
    <reaction evidence="1">
        <text>CDP + ATP = CTP + ADP</text>
        <dbReference type="Rhea" id="RHEA:25237"/>
        <dbReference type="ChEBI" id="CHEBI:30616"/>
        <dbReference type="ChEBI" id="CHEBI:37563"/>
        <dbReference type="ChEBI" id="CHEBI:58069"/>
        <dbReference type="ChEBI" id="CHEBI:456216"/>
        <dbReference type="EC" id="2.7.4.6"/>
    </reaction>
</comment>
<comment type="catalytic activity">
    <reaction evidence="1">
        <text>UDP + ATP = UTP + ADP</text>
        <dbReference type="Rhea" id="RHEA:25098"/>
        <dbReference type="ChEBI" id="CHEBI:30616"/>
        <dbReference type="ChEBI" id="CHEBI:46398"/>
        <dbReference type="ChEBI" id="CHEBI:58223"/>
        <dbReference type="ChEBI" id="CHEBI:456216"/>
        <dbReference type="EC" id="2.7.4.6"/>
    </reaction>
</comment>
<comment type="catalytic activity">
    <reaction evidence="1">
        <text>GTP + UDP = UTP + GDP</text>
        <dbReference type="Rhea" id="RHEA:79863"/>
        <dbReference type="ChEBI" id="CHEBI:37565"/>
        <dbReference type="ChEBI" id="CHEBI:46398"/>
        <dbReference type="ChEBI" id="CHEBI:58189"/>
        <dbReference type="ChEBI" id="CHEBI:58223"/>
    </reaction>
</comment>
<comment type="catalytic activity">
    <reaction evidence="1">
        <text>dADP + GTP = dATP + GDP</text>
        <dbReference type="Rhea" id="RHEA:79871"/>
        <dbReference type="ChEBI" id="CHEBI:37565"/>
        <dbReference type="ChEBI" id="CHEBI:57667"/>
        <dbReference type="ChEBI" id="CHEBI:58189"/>
        <dbReference type="ChEBI" id="CHEBI:61404"/>
    </reaction>
</comment>
<comment type="catalytic activity">
    <reaction evidence="1">
        <text>dCDP + GTP = dCTP + GDP</text>
        <dbReference type="Rhea" id="RHEA:79875"/>
        <dbReference type="ChEBI" id="CHEBI:37565"/>
        <dbReference type="ChEBI" id="CHEBI:58189"/>
        <dbReference type="ChEBI" id="CHEBI:58593"/>
        <dbReference type="ChEBI" id="CHEBI:61481"/>
    </reaction>
</comment>
<comment type="catalytic activity">
    <reaction evidence="1">
        <text>dCDP + ATP = dCTP + ADP</text>
        <dbReference type="Rhea" id="RHEA:27678"/>
        <dbReference type="ChEBI" id="CHEBI:30616"/>
        <dbReference type="ChEBI" id="CHEBI:58593"/>
        <dbReference type="ChEBI" id="CHEBI:61481"/>
        <dbReference type="ChEBI" id="CHEBI:456216"/>
        <dbReference type="EC" id="2.7.4.6"/>
    </reaction>
</comment>
<comment type="catalytic activity">
    <reaction evidence="1">
        <text>dGDP + ATP = dGTP + ADP</text>
        <dbReference type="Rhea" id="RHEA:27690"/>
        <dbReference type="ChEBI" id="CHEBI:30616"/>
        <dbReference type="ChEBI" id="CHEBI:58595"/>
        <dbReference type="ChEBI" id="CHEBI:61429"/>
        <dbReference type="ChEBI" id="CHEBI:456216"/>
        <dbReference type="EC" id="2.7.4.6"/>
    </reaction>
</comment>
<comment type="catalytic activity">
    <reaction evidence="1">
        <text>dTDP + GTP = dTTP + GDP</text>
        <dbReference type="Rhea" id="RHEA:79867"/>
        <dbReference type="ChEBI" id="CHEBI:37565"/>
        <dbReference type="ChEBI" id="CHEBI:37568"/>
        <dbReference type="ChEBI" id="CHEBI:58189"/>
        <dbReference type="ChEBI" id="CHEBI:58369"/>
    </reaction>
</comment>
<comment type="catalytic activity">
    <reaction evidence="1">
        <text>dTDP + ATP = dTTP + ADP</text>
        <dbReference type="Rhea" id="RHEA:27682"/>
        <dbReference type="ChEBI" id="CHEBI:30616"/>
        <dbReference type="ChEBI" id="CHEBI:37568"/>
        <dbReference type="ChEBI" id="CHEBI:58369"/>
        <dbReference type="ChEBI" id="CHEBI:456216"/>
        <dbReference type="EC" id="2.7.4.6"/>
    </reaction>
</comment>
<comment type="subunit">
    <text evidence="1">Monomer. Interacts with SLC25A5/ANT2.</text>
</comment>
<comment type="subcellular location">
    <subcellularLocation>
        <location evidence="1 3">Mitochondrion matrix</location>
    </subcellularLocation>
</comment>
<comment type="domain">
    <text evidence="3">Consists of three domains, a large central CORE domain and two small peripheral domains, NMPbind and LID, which undergo movements during catalysis. The LID domain closes over the site of phosphoryl transfer upon GTP/ATP binding. Assembling and dissambling the active center during each catalytic cycle provides an effective means to prevent GTP/ATP hydrolysis.</text>
</comment>
<comment type="similarity">
    <text evidence="3">Belongs to the adenylate kinase family. AK3 subfamily.</text>
</comment>
<organism>
    <name type="scientific">Pongo abelii</name>
    <name type="common">Sumatran orangutan</name>
    <name type="synonym">Pongo pygmaeus abelii</name>
    <dbReference type="NCBI Taxonomy" id="9601"/>
    <lineage>
        <taxon>Eukaryota</taxon>
        <taxon>Metazoa</taxon>
        <taxon>Chordata</taxon>
        <taxon>Craniata</taxon>
        <taxon>Vertebrata</taxon>
        <taxon>Euteleostomi</taxon>
        <taxon>Mammalia</taxon>
        <taxon>Eutheria</taxon>
        <taxon>Euarchontoglires</taxon>
        <taxon>Primates</taxon>
        <taxon>Haplorrhini</taxon>
        <taxon>Catarrhini</taxon>
        <taxon>Hominidae</taxon>
        <taxon>Pongo</taxon>
    </lineage>
</organism>
<gene>
    <name evidence="1" type="primary">AK4</name>
</gene>